<dbReference type="EC" id="7.3.2.5" evidence="1"/>
<dbReference type="EMBL" id="CP000308">
    <property type="protein sequence ID" value="ABG13021.1"/>
    <property type="molecule type" value="Genomic_DNA"/>
</dbReference>
<dbReference type="RefSeq" id="WP_002210758.1">
    <property type="nucleotide sequence ID" value="NZ_CP009906.1"/>
</dbReference>
<dbReference type="SMR" id="Q1C951"/>
<dbReference type="GeneID" id="57977286"/>
<dbReference type="KEGG" id="ypa:YPA_1054"/>
<dbReference type="Proteomes" id="UP000001971">
    <property type="component" value="Chromosome"/>
</dbReference>
<dbReference type="GO" id="GO:0005886">
    <property type="term" value="C:plasma membrane"/>
    <property type="evidence" value="ECO:0007669"/>
    <property type="project" value="UniProtKB-SubCell"/>
</dbReference>
<dbReference type="GO" id="GO:0015412">
    <property type="term" value="F:ABC-type molybdate transporter activity"/>
    <property type="evidence" value="ECO:0007669"/>
    <property type="project" value="UniProtKB-EC"/>
</dbReference>
<dbReference type="GO" id="GO:0005524">
    <property type="term" value="F:ATP binding"/>
    <property type="evidence" value="ECO:0007669"/>
    <property type="project" value="UniProtKB-KW"/>
</dbReference>
<dbReference type="GO" id="GO:0016887">
    <property type="term" value="F:ATP hydrolysis activity"/>
    <property type="evidence" value="ECO:0007669"/>
    <property type="project" value="InterPro"/>
</dbReference>
<dbReference type="FunFam" id="3.40.50.300:FF:000634">
    <property type="entry name" value="Molybdenum import ATP-binding protein ModC"/>
    <property type="match status" value="1"/>
</dbReference>
<dbReference type="Gene3D" id="2.40.50.100">
    <property type="match status" value="1"/>
</dbReference>
<dbReference type="Gene3D" id="3.40.50.300">
    <property type="entry name" value="P-loop containing nucleotide triphosphate hydrolases"/>
    <property type="match status" value="1"/>
</dbReference>
<dbReference type="InterPro" id="IPR003593">
    <property type="entry name" value="AAA+_ATPase"/>
</dbReference>
<dbReference type="InterPro" id="IPR003439">
    <property type="entry name" value="ABC_transporter-like_ATP-bd"/>
</dbReference>
<dbReference type="InterPro" id="IPR017871">
    <property type="entry name" value="ABC_transporter-like_CS"/>
</dbReference>
<dbReference type="InterPro" id="IPR008995">
    <property type="entry name" value="Mo/tungstate-bd_C_term_dom"/>
</dbReference>
<dbReference type="InterPro" id="IPR011868">
    <property type="entry name" value="ModC_ABC_ATP-bd"/>
</dbReference>
<dbReference type="InterPro" id="IPR050334">
    <property type="entry name" value="Molybdenum_import_ModC"/>
</dbReference>
<dbReference type="InterPro" id="IPR004606">
    <property type="entry name" value="Mop_domain"/>
</dbReference>
<dbReference type="InterPro" id="IPR027417">
    <property type="entry name" value="P-loop_NTPase"/>
</dbReference>
<dbReference type="InterPro" id="IPR005116">
    <property type="entry name" value="Transp-assoc_OB_typ1"/>
</dbReference>
<dbReference type="NCBIfam" id="TIGR02142">
    <property type="entry name" value="modC_ABC"/>
    <property type="match status" value="1"/>
</dbReference>
<dbReference type="NCBIfam" id="TIGR00638">
    <property type="entry name" value="Mop"/>
    <property type="match status" value="1"/>
</dbReference>
<dbReference type="NCBIfam" id="NF008355">
    <property type="entry name" value="PRK11144.1"/>
    <property type="match status" value="1"/>
</dbReference>
<dbReference type="PANTHER" id="PTHR43514">
    <property type="entry name" value="ABC TRANSPORTER I FAMILY MEMBER 10"/>
    <property type="match status" value="1"/>
</dbReference>
<dbReference type="PANTHER" id="PTHR43514:SF4">
    <property type="entry name" value="ABC TRANSPORTER I FAMILY MEMBER 10"/>
    <property type="match status" value="1"/>
</dbReference>
<dbReference type="Pfam" id="PF00005">
    <property type="entry name" value="ABC_tran"/>
    <property type="match status" value="1"/>
</dbReference>
<dbReference type="Pfam" id="PF03459">
    <property type="entry name" value="TOBE"/>
    <property type="match status" value="1"/>
</dbReference>
<dbReference type="SMART" id="SM00382">
    <property type="entry name" value="AAA"/>
    <property type="match status" value="1"/>
</dbReference>
<dbReference type="SUPFAM" id="SSF50331">
    <property type="entry name" value="MOP-like"/>
    <property type="match status" value="1"/>
</dbReference>
<dbReference type="SUPFAM" id="SSF52540">
    <property type="entry name" value="P-loop containing nucleoside triphosphate hydrolases"/>
    <property type="match status" value="1"/>
</dbReference>
<dbReference type="PROSITE" id="PS00211">
    <property type="entry name" value="ABC_TRANSPORTER_1"/>
    <property type="match status" value="1"/>
</dbReference>
<dbReference type="PROSITE" id="PS50893">
    <property type="entry name" value="ABC_TRANSPORTER_2"/>
    <property type="match status" value="1"/>
</dbReference>
<dbReference type="PROSITE" id="PS51241">
    <property type="entry name" value="MODC"/>
    <property type="match status" value="1"/>
</dbReference>
<dbReference type="PROSITE" id="PS51866">
    <property type="entry name" value="MOP"/>
    <property type="match status" value="1"/>
</dbReference>
<comment type="function">
    <text evidence="1">Part of the ABC transporter complex ModABC involved in molybdenum import. Responsible for energy coupling to the transport system.</text>
</comment>
<comment type="catalytic activity">
    <reaction evidence="1">
        <text>molybdate(out) + ATP + H2O = molybdate(in) + ADP + phosphate + H(+)</text>
        <dbReference type="Rhea" id="RHEA:22020"/>
        <dbReference type="ChEBI" id="CHEBI:15377"/>
        <dbReference type="ChEBI" id="CHEBI:15378"/>
        <dbReference type="ChEBI" id="CHEBI:30616"/>
        <dbReference type="ChEBI" id="CHEBI:36264"/>
        <dbReference type="ChEBI" id="CHEBI:43474"/>
        <dbReference type="ChEBI" id="CHEBI:456216"/>
        <dbReference type="EC" id="7.3.2.5"/>
    </reaction>
</comment>
<comment type="subunit">
    <text evidence="1">The complex is composed of two ATP-binding proteins (ModC), two transmembrane proteins (ModB) and a solute-binding protein (ModA).</text>
</comment>
<comment type="subcellular location">
    <subcellularLocation>
        <location evidence="1">Cell inner membrane</location>
        <topology evidence="1">Peripheral membrane protein</topology>
    </subcellularLocation>
</comment>
<comment type="similarity">
    <text evidence="1">Belongs to the ABC transporter superfamily. Molybdate importer (TC 3.A.1.8) family.</text>
</comment>
<reference key="1">
    <citation type="journal article" date="2006" name="J. Bacteriol.">
        <title>Complete genome sequence of Yersinia pestis strains Antiqua and Nepal516: evidence of gene reduction in an emerging pathogen.</title>
        <authorList>
            <person name="Chain P.S.G."/>
            <person name="Hu P."/>
            <person name="Malfatti S.A."/>
            <person name="Radnedge L."/>
            <person name="Larimer F."/>
            <person name="Vergez L.M."/>
            <person name="Worsham P."/>
            <person name="Chu M.C."/>
            <person name="Andersen G.L."/>
        </authorList>
    </citation>
    <scope>NUCLEOTIDE SEQUENCE [LARGE SCALE GENOMIC DNA]</scope>
    <source>
        <strain>Antiqua</strain>
    </source>
</reference>
<accession>Q1C951</accession>
<sequence length="359" mass="39693">MLELNFSQQLGDLHLQVATDLPAQGITAIFGLSGAGKTSLINVIGGLTRPQQGRVILNGRVLVDAEKNIYLPPEKRRVGYVFQDARLFPHYRVRGNLQYGMAASMRGQFDAIVGLLGIEPLLNRFPFTLSGGEKQRVAIGRALLTAPELLLMDEPLASLDLPRKRELLPYLERLAQDVNTPILYVSHSMDEILRLADQVVVMDAGKVRAVGGLEEVWASSALRPWLQREEPSSILRVSVIGHHDRYAMTALALGDQRLWVGKLDAAEGNSMRIRINAADVSLALQPPHSSSIRNILPVKVAECLDVDGQVDVKLAIGEQWLWARITPWARDELGLKPGQWVYAQIKSVSFNRQNGPVPD</sequence>
<protein>
    <recommendedName>
        <fullName evidence="1">Molybdenum import ATP-binding protein ModC</fullName>
        <ecNumber evidence="1">7.3.2.5</ecNumber>
    </recommendedName>
</protein>
<evidence type="ECO:0000255" key="1">
    <source>
        <dbReference type="HAMAP-Rule" id="MF_01705"/>
    </source>
</evidence>
<evidence type="ECO:0000255" key="2">
    <source>
        <dbReference type="PROSITE-ProRule" id="PRU01213"/>
    </source>
</evidence>
<name>MODC_YERPA</name>
<proteinExistence type="inferred from homology"/>
<gene>
    <name evidence="1" type="primary">modC</name>
    <name type="ordered locus">YPA_1054</name>
</gene>
<feature type="chain" id="PRO_0000271698" description="Molybdenum import ATP-binding protein ModC">
    <location>
        <begin position="1"/>
        <end position="359"/>
    </location>
</feature>
<feature type="domain" description="ABC transporter" evidence="1">
    <location>
        <begin position="1"/>
        <end position="229"/>
    </location>
</feature>
<feature type="domain" description="Mop" evidence="2">
    <location>
        <begin position="289"/>
        <end position="354"/>
    </location>
</feature>
<feature type="binding site" evidence="1">
    <location>
        <begin position="31"/>
        <end position="38"/>
    </location>
    <ligand>
        <name>ATP</name>
        <dbReference type="ChEBI" id="CHEBI:30616"/>
    </ligand>
</feature>
<organism>
    <name type="scientific">Yersinia pestis bv. Antiqua (strain Antiqua)</name>
    <dbReference type="NCBI Taxonomy" id="360102"/>
    <lineage>
        <taxon>Bacteria</taxon>
        <taxon>Pseudomonadati</taxon>
        <taxon>Pseudomonadota</taxon>
        <taxon>Gammaproteobacteria</taxon>
        <taxon>Enterobacterales</taxon>
        <taxon>Yersiniaceae</taxon>
        <taxon>Yersinia</taxon>
    </lineage>
</organism>
<keyword id="KW-0067">ATP-binding</keyword>
<keyword id="KW-0997">Cell inner membrane</keyword>
<keyword id="KW-1003">Cell membrane</keyword>
<keyword id="KW-0472">Membrane</keyword>
<keyword id="KW-0500">Molybdenum</keyword>
<keyword id="KW-0547">Nucleotide-binding</keyword>
<keyword id="KW-1278">Translocase</keyword>
<keyword id="KW-0813">Transport</keyword>